<comment type="function">
    <text evidence="1">Catalyzes the isomerization between 2-isopropylmalate and 3-isopropylmalate, via the formation of 2-isopropylmaleate.</text>
</comment>
<comment type="catalytic activity">
    <reaction evidence="1">
        <text>(2R,3S)-3-isopropylmalate = (2S)-2-isopropylmalate</text>
        <dbReference type="Rhea" id="RHEA:32287"/>
        <dbReference type="ChEBI" id="CHEBI:1178"/>
        <dbReference type="ChEBI" id="CHEBI:35121"/>
        <dbReference type="EC" id="4.2.1.33"/>
    </reaction>
</comment>
<comment type="pathway">
    <text evidence="1">Amino-acid biosynthesis; L-leucine biosynthesis; L-leucine from 3-methyl-2-oxobutanoate: step 2/4.</text>
</comment>
<comment type="subunit">
    <text evidence="1">Heterodimer of LeuC and LeuD.</text>
</comment>
<comment type="similarity">
    <text evidence="1">Belongs to the LeuD family. LeuD type 1 subfamily.</text>
</comment>
<evidence type="ECO:0000255" key="1">
    <source>
        <dbReference type="HAMAP-Rule" id="MF_01031"/>
    </source>
</evidence>
<reference key="1">
    <citation type="submission" date="2007-06" db="EMBL/GenBank/DDBJ databases">
        <title>Complete sequence of chromosome of Staphylococcus aureus subsp. aureus JH1.</title>
        <authorList>
            <consortium name="US DOE Joint Genome Institute"/>
            <person name="Copeland A."/>
            <person name="Lucas S."/>
            <person name="Lapidus A."/>
            <person name="Barry K."/>
            <person name="Detter J.C."/>
            <person name="Glavina del Rio T."/>
            <person name="Hammon N."/>
            <person name="Israni S."/>
            <person name="Dalin E."/>
            <person name="Tice H."/>
            <person name="Pitluck S."/>
            <person name="Chain P."/>
            <person name="Malfatti S."/>
            <person name="Shin M."/>
            <person name="Vergez L."/>
            <person name="Schmutz J."/>
            <person name="Larimer F."/>
            <person name="Land M."/>
            <person name="Hauser L."/>
            <person name="Kyrpides N."/>
            <person name="Ivanova N."/>
            <person name="Tomasz A."/>
            <person name="Richardson P."/>
        </authorList>
    </citation>
    <scope>NUCLEOTIDE SEQUENCE [LARGE SCALE GENOMIC DNA]</scope>
    <source>
        <strain>JH1</strain>
    </source>
</reference>
<protein>
    <recommendedName>
        <fullName evidence="1">3-isopropylmalate dehydratase small subunit</fullName>
        <ecNumber evidence="1">4.2.1.33</ecNumber>
    </recommendedName>
    <alternativeName>
        <fullName evidence="1">Alpha-IPM isomerase</fullName>
        <shortName evidence="1">IPMI</shortName>
    </alternativeName>
    <alternativeName>
        <fullName evidence="1">Isopropylmalate isomerase</fullName>
    </alternativeName>
</protein>
<gene>
    <name evidence="1" type="primary">leuD</name>
    <name type="ordered locus">SaurJH1_2134</name>
</gene>
<name>LEUD_STAA2</name>
<organism>
    <name type="scientific">Staphylococcus aureus (strain JH1)</name>
    <dbReference type="NCBI Taxonomy" id="359787"/>
    <lineage>
        <taxon>Bacteria</taxon>
        <taxon>Bacillati</taxon>
        <taxon>Bacillota</taxon>
        <taxon>Bacilli</taxon>
        <taxon>Bacillales</taxon>
        <taxon>Staphylococcaceae</taxon>
        <taxon>Staphylococcus</taxon>
    </lineage>
</organism>
<keyword id="KW-0028">Amino-acid biosynthesis</keyword>
<keyword id="KW-0100">Branched-chain amino acid biosynthesis</keyword>
<keyword id="KW-0432">Leucine biosynthesis</keyword>
<keyword id="KW-0456">Lyase</keyword>
<accession>A6U3E5</accession>
<proteinExistence type="inferred from homology"/>
<feature type="chain" id="PRO_1000084269" description="3-isopropylmalate dehydratase small subunit">
    <location>
        <begin position="1"/>
        <end position="190"/>
    </location>
</feature>
<sequence length="190" mass="21623">MAAIKPITTYKGKIVPLFNDNIDTDQIIPKVHLKRISKSGFGPFAFDEWRYLPDGSDNPDFNPNKPQYKGASILITGDNFGCGSSREHAAWALKDYGFHIIIAGSFSDIFYMNCTKNAMLPIVLEKSAREHLAQYEEIEIDLPNQTVSSPDKRFHFEIDETWKNKLVNGLDDIAITLQYESLIEKYEKSL</sequence>
<dbReference type="EC" id="4.2.1.33" evidence="1"/>
<dbReference type="EMBL" id="CP000736">
    <property type="protein sequence ID" value="ABR52963.1"/>
    <property type="molecule type" value="Genomic_DNA"/>
</dbReference>
<dbReference type="SMR" id="A6U3E5"/>
<dbReference type="KEGG" id="sah:SaurJH1_2134"/>
<dbReference type="HOGENOM" id="CLU_081378_0_3_9"/>
<dbReference type="UniPathway" id="UPA00048">
    <property type="reaction ID" value="UER00071"/>
</dbReference>
<dbReference type="GO" id="GO:0009316">
    <property type="term" value="C:3-isopropylmalate dehydratase complex"/>
    <property type="evidence" value="ECO:0007669"/>
    <property type="project" value="InterPro"/>
</dbReference>
<dbReference type="GO" id="GO:0003861">
    <property type="term" value="F:3-isopropylmalate dehydratase activity"/>
    <property type="evidence" value="ECO:0007669"/>
    <property type="project" value="UniProtKB-UniRule"/>
</dbReference>
<dbReference type="GO" id="GO:0009098">
    <property type="term" value="P:L-leucine biosynthetic process"/>
    <property type="evidence" value="ECO:0007669"/>
    <property type="project" value="UniProtKB-UniRule"/>
</dbReference>
<dbReference type="CDD" id="cd01577">
    <property type="entry name" value="IPMI_Swivel"/>
    <property type="match status" value="1"/>
</dbReference>
<dbReference type="FunFam" id="3.20.19.10:FF:000003">
    <property type="entry name" value="3-isopropylmalate dehydratase small subunit"/>
    <property type="match status" value="1"/>
</dbReference>
<dbReference type="Gene3D" id="3.20.19.10">
    <property type="entry name" value="Aconitase, domain 4"/>
    <property type="match status" value="1"/>
</dbReference>
<dbReference type="HAMAP" id="MF_01031">
    <property type="entry name" value="LeuD_type1"/>
    <property type="match status" value="1"/>
</dbReference>
<dbReference type="InterPro" id="IPR004431">
    <property type="entry name" value="3-IsopropMal_deHydase_ssu"/>
</dbReference>
<dbReference type="InterPro" id="IPR015928">
    <property type="entry name" value="Aconitase/3IPM_dehydase_swvl"/>
</dbReference>
<dbReference type="InterPro" id="IPR000573">
    <property type="entry name" value="AconitaseA/IPMdHydase_ssu_swvl"/>
</dbReference>
<dbReference type="InterPro" id="IPR033940">
    <property type="entry name" value="IPMI_Swivel"/>
</dbReference>
<dbReference type="InterPro" id="IPR050075">
    <property type="entry name" value="LeuD"/>
</dbReference>
<dbReference type="NCBIfam" id="TIGR00171">
    <property type="entry name" value="leuD"/>
    <property type="match status" value="1"/>
</dbReference>
<dbReference type="NCBIfam" id="NF002458">
    <property type="entry name" value="PRK01641.1"/>
    <property type="match status" value="1"/>
</dbReference>
<dbReference type="PANTHER" id="PTHR43345:SF5">
    <property type="entry name" value="3-ISOPROPYLMALATE DEHYDRATASE SMALL SUBUNIT"/>
    <property type="match status" value="1"/>
</dbReference>
<dbReference type="PANTHER" id="PTHR43345">
    <property type="entry name" value="3-ISOPROPYLMALATE DEHYDRATASE SMALL SUBUNIT 2-RELATED-RELATED"/>
    <property type="match status" value="1"/>
</dbReference>
<dbReference type="Pfam" id="PF00694">
    <property type="entry name" value="Aconitase_C"/>
    <property type="match status" value="1"/>
</dbReference>
<dbReference type="SUPFAM" id="SSF52016">
    <property type="entry name" value="LeuD/IlvD-like"/>
    <property type="match status" value="1"/>
</dbReference>